<accession>P49253</accession>
<feature type="chain" id="PRO_0000099864" description="Amine oxidase [flavin-containing]">
    <location>
        <begin position="1"/>
        <end position="522"/>
    </location>
</feature>
<feature type="topological domain" description="Cytoplasmic" evidence="1">
    <location>
        <begin position="1"/>
        <end position="492"/>
    </location>
</feature>
<feature type="transmembrane region" description="Helical; Anchor for type IV membrane protein" evidence="1">
    <location>
        <begin position="493"/>
        <end position="513"/>
    </location>
</feature>
<feature type="topological domain" description="Mitochondrial intermembrane" evidence="1">
    <location>
        <begin position="514"/>
        <end position="522"/>
    </location>
</feature>
<feature type="site" description="Important for catalytic activity" evidence="1">
    <location>
        <position position="158"/>
    </location>
</feature>
<feature type="site" description="Important for catalytic activity" evidence="1">
    <location>
        <position position="367"/>
    </location>
</feature>
<feature type="site" description="Important for catalytic activity" evidence="1">
    <location>
        <position position="384"/>
    </location>
</feature>
<feature type="modified residue" description="S-8alpha-FAD cysteine" evidence="2">
    <location>
        <position position="399"/>
    </location>
</feature>
<proteinExistence type="evidence at transcript level"/>
<protein>
    <recommendedName>
        <fullName>Amine oxidase [flavin-containing]</fullName>
        <ecNumber>1.4.3.4</ecNumber>
    </recommendedName>
    <alternativeName>
        <fullName>Monoamine oxidase</fullName>
        <shortName>MAO</shortName>
    </alternativeName>
</protein>
<sequence length="522" mass="58937">MTAQNTFDVIVIGGGISGLSAAKLLKEKGLSPVVLEARDRVGGRTFTVQNEQTKYVDLGGAYVGPTQNRILRLAKECGVKTIKVNEEERLVHYVKGKSYPFKGSFPPMWNPFALMDYNNLWRKMDEMGSEIPREAPWKAPHAEEWDKMTMKQLFDKICWTSSARRFATLFVNVNVTSEPHEVSALWFLWYVKQCGGTMRIFSTTNGGQERKFLGGSSQISECMAKELGERVKMESPVYKIDQTGDMVEVETLNKETYKAKYVIVATPPGLNLKMHFNPELPPLRNQLIHRVPMGSVIKCIVYYRENFWRKKGYCGTMVIEEEEAPIGLTLDDTKPDGTVPAIMGFILARKCRKLCGLTKEERKKRICEIYSRVLGSEEALHPVHYEEKNWCEEEYSGGCYTAYFPPGILTQYGKVLREPVGRLYFAGTETATEWSGYMEGAVQAGERAAREVMYEMGRIPQSQIWQTEPESVEVPALPFVTTFWERNLPSVGGFINFLAASVLSVATAAGMLAYQKGLLTRS</sequence>
<evidence type="ECO:0000250" key="1"/>
<evidence type="ECO:0000250" key="2">
    <source>
        <dbReference type="UniProtKB" id="P27338"/>
    </source>
</evidence>
<evidence type="ECO:0000305" key="3"/>
<comment type="function">
    <text>Catalyzes the oxidative deamination of biogenic and xenobiotic amines and has important functions in the metabolism of neuroactive and vasoactive amines in the central nervous system and peripheral tissues. Oxidizes both 5-hydroxytryptamine (5-HT) and beta-phenylethylamine (PEA).</text>
</comment>
<comment type="catalytic activity">
    <reaction>
        <text>a secondary aliphatic amine + O2 + H2O = a primary amine + an aldehyde + H2O2</text>
        <dbReference type="Rhea" id="RHEA:26414"/>
        <dbReference type="ChEBI" id="CHEBI:15377"/>
        <dbReference type="ChEBI" id="CHEBI:15379"/>
        <dbReference type="ChEBI" id="CHEBI:16240"/>
        <dbReference type="ChEBI" id="CHEBI:17478"/>
        <dbReference type="ChEBI" id="CHEBI:58855"/>
        <dbReference type="ChEBI" id="CHEBI:65296"/>
        <dbReference type="EC" id="1.4.3.4"/>
    </reaction>
</comment>
<comment type="cofactor">
    <cofactor evidence="2">
        <name>FAD</name>
        <dbReference type="ChEBI" id="CHEBI:57692"/>
    </cofactor>
</comment>
<comment type="subcellular location">
    <subcellularLocation>
        <location>Mitochondrion outer membrane</location>
        <topology>Single-pass type IV membrane protein</topology>
        <orientation>Cytoplasmic side</orientation>
    </subcellularLocation>
</comment>
<comment type="similarity">
    <text evidence="3">Belongs to the flavin monoamine oxidase family.</text>
</comment>
<comment type="sequence caution" evidence="3">
    <conflict type="frameshift">
        <sequence resource="EMBL-CDS" id="AAA64302"/>
    </conflict>
    <text>Probable frameshift identified on the basis of homology with other members of this family.</text>
</comment>
<reference key="1">
    <citation type="journal article" date="1994" name="Mol. Pharmacol.">
        <title>Cloning of a novel monoamine oxidase cDNA from trout liver.</title>
        <authorList>
            <person name="Chen K."/>
            <person name="Wu H.-F."/>
            <person name="Grimsby J."/>
            <person name="Shih J.C."/>
        </authorList>
    </citation>
    <scope>NUCLEOTIDE SEQUENCE [MRNA]</scope>
    <scope>ACTIVITY</scope>
    <source>
        <tissue>Liver</tissue>
    </source>
</reference>
<gene>
    <name type="primary">mao</name>
</gene>
<organism>
    <name type="scientific">Oncorhynchus mykiss</name>
    <name type="common">Rainbow trout</name>
    <name type="synonym">Salmo gairdneri</name>
    <dbReference type="NCBI Taxonomy" id="8022"/>
    <lineage>
        <taxon>Eukaryota</taxon>
        <taxon>Metazoa</taxon>
        <taxon>Chordata</taxon>
        <taxon>Craniata</taxon>
        <taxon>Vertebrata</taxon>
        <taxon>Euteleostomi</taxon>
        <taxon>Actinopterygii</taxon>
        <taxon>Neopterygii</taxon>
        <taxon>Teleostei</taxon>
        <taxon>Protacanthopterygii</taxon>
        <taxon>Salmoniformes</taxon>
        <taxon>Salmonidae</taxon>
        <taxon>Salmoninae</taxon>
        <taxon>Oncorhynchus</taxon>
    </lineage>
</organism>
<keyword id="KW-0274">FAD</keyword>
<keyword id="KW-0285">Flavoprotein</keyword>
<keyword id="KW-0472">Membrane</keyword>
<keyword id="KW-0496">Mitochondrion</keyword>
<keyword id="KW-1000">Mitochondrion outer membrane</keyword>
<keyword id="KW-0560">Oxidoreductase</keyword>
<keyword id="KW-0812">Transmembrane</keyword>
<keyword id="KW-1133">Transmembrane helix</keyword>
<name>AOF_ONCMY</name>
<dbReference type="EC" id="1.4.3.4"/>
<dbReference type="EMBL" id="L37878">
    <property type="protein sequence ID" value="AAA64302.1"/>
    <property type="status" value="ALT_FRAME"/>
    <property type="molecule type" value="mRNA"/>
</dbReference>
<dbReference type="PIR" id="I51346">
    <property type="entry name" value="I51346"/>
</dbReference>
<dbReference type="SMR" id="P49253"/>
<dbReference type="KEGG" id="omy:100136729"/>
<dbReference type="OrthoDB" id="7777654at2759"/>
<dbReference type="Proteomes" id="UP000694395">
    <property type="component" value="Unplaced"/>
</dbReference>
<dbReference type="GO" id="GO:0005741">
    <property type="term" value="C:mitochondrial outer membrane"/>
    <property type="evidence" value="ECO:0007669"/>
    <property type="project" value="UniProtKB-SubCell"/>
</dbReference>
<dbReference type="GO" id="GO:0050660">
    <property type="term" value="F:flavin adenine dinucleotide binding"/>
    <property type="evidence" value="ECO:0007669"/>
    <property type="project" value="TreeGrafter"/>
</dbReference>
<dbReference type="GO" id="GO:0097621">
    <property type="term" value="F:monoamine oxidase activity"/>
    <property type="evidence" value="ECO:0007669"/>
    <property type="project" value="UniProtKB-EC"/>
</dbReference>
<dbReference type="GO" id="GO:0008131">
    <property type="term" value="F:primary methylamine oxidase activity"/>
    <property type="evidence" value="ECO:0007669"/>
    <property type="project" value="UniProtKB-ARBA"/>
</dbReference>
<dbReference type="FunFam" id="1.10.405.10:FF:000005">
    <property type="entry name" value="Amine oxidase [flavin-containing]"/>
    <property type="match status" value="1"/>
</dbReference>
<dbReference type="Gene3D" id="3.90.660.10">
    <property type="match status" value="1"/>
</dbReference>
<dbReference type="Gene3D" id="6.10.250.130">
    <property type="match status" value="1"/>
</dbReference>
<dbReference type="Gene3D" id="3.50.50.60">
    <property type="entry name" value="FAD/NAD(P)-binding domain"/>
    <property type="match status" value="1"/>
</dbReference>
<dbReference type="Gene3D" id="1.10.405.10">
    <property type="entry name" value="Guanine Nucleotide Dissociation Inhibitor, domain 1"/>
    <property type="match status" value="1"/>
</dbReference>
<dbReference type="InterPro" id="IPR002937">
    <property type="entry name" value="Amino_oxidase"/>
</dbReference>
<dbReference type="InterPro" id="IPR036188">
    <property type="entry name" value="FAD/NAD-bd_sf"/>
</dbReference>
<dbReference type="InterPro" id="IPR001613">
    <property type="entry name" value="Flavin_amine_oxidase"/>
</dbReference>
<dbReference type="InterPro" id="IPR050703">
    <property type="entry name" value="Flavin_MAO"/>
</dbReference>
<dbReference type="PANTHER" id="PTHR43563">
    <property type="entry name" value="AMINE OXIDASE"/>
    <property type="match status" value="1"/>
</dbReference>
<dbReference type="PANTHER" id="PTHR43563:SF11">
    <property type="entry name" value="AMINE OXIDASE [FLAVIN-CONTAINING] A"/>
    <property type="match status" value="1"/>
</dbReference>
<dbReference type="Pfam" id="PF01593">
    <property type="entry name" value="Amino_oxidase"/>
    <property type="match status" value="1"/>
</dbReference>
<dbReference type="PRINTS" id="PR00757">
    <property type="entry name" value="AMINEOXDASEF"/>
</dbReference>
<dbReference type="SUPFAM" id="SSF54373">
    <property type="entry name" value="FAD-linked reductases, C-terminal domain"/>
    <property type="match status" value="1"/>
</dbReference>
<dbReference type="SUPFAM" id="SSF51905">
    <property type="entry name" value="FAD/NAD(P)-binding domain"/>
    <property type="match status" value="1"/>
</dbReference>